<accession>B4KZ45</accession>
<feature type="chain" id="PRO_0000364246" description="Eukaryotic translation initiation factor 3 subunit L">
    <location>
        <begin position="1"/>
        <end position="538"/>
    </location>
</feature>
<feature type="domain" description="PCI" evidence="2">
    <location>
        <begin position="305"/>
        <end position="513"/>
    </location>
</feature>
<keyword id="KW-0963">Cytoplasm</keyword>
<keyword id="KW-0396">Initiation factor</keyword>
<keyword id="KW-0648">Protein biosynthesis</keyword>
<keyword id="KW-1185">Reference proteome</keyword>
<organism>
    <name type="scientific">Drosophila mojavensis</name>
    <name type="common">Fruit fly</name>
    <dbReference type="NCBI Taxonomy" id="7230"/>
    <lineage>
        <taxon>Eukaryota</taxon>
        <taxon>Metazoa</taxon>
        <taxon>Ecdysozoa</taxon>
        <taxon>Arthropoda</taxon>
        <taxon>Hexapoda</taxon>
        <taxon>Insecta</taxon>
        <taxon>Pterygota</taxon>
        <taxon>Neoptera</taxon>
        <taxon>Endopterygota</taxon>
        <taxon>Diptera</taxon>
        <taxon>Brachycera</taxon>
        <taxon>Muscomorpha</taxon>
        <taxon>Ephydroidea</taxon>
        <taxon>Drosophilidae</taxon>
        <taxon>Drosophila</taxon>
    </lineage>
</organism>
<gene>
    <name type="ORF">GI12903</name>
</gene>
<comment type="function">
    <text evidence="1">Component of the eukaryotic translation initiation factor 3 (eIF-3) complex, which is involved in protein synthesis of a specialized repertoire of mRNAs and, together with other initiation factors, stimulates binding of mRNA and methionyl-tRNAi to the 40S ribosome. The eIF-3 complex specifically targets and initiates translation of a subset of mRNAs involved in cell proliferation.</text>
</comment>
<comment type="subunit">
    <text evidence="1">Component of the eukaryotic translation initiation factor 3 (eIF-3) complex. The eIF-3 complex interacts with pix.</text>
</comment>
<comment type="subcellular location">
    <subcellularLocation>
        <location evidence="1">Cytoplasm</location>
    </subcellularLocation>
</comment>
<comment type="similarity">
    <text evidence="1">Belongs to the eIF-3 subunit L family.</text>
</comment>
<proteinExistence type="inferred from homology"/>
<evidence type="ECO:0000255" key="1">
    <source>
        <dbReference type="HAMAP-Rule" id="MF_03011"/>
    </source>
</evidence>
<evidence type="ECO:0000255" key="2">
    <source>
        <dbReference type="PROSITE-ProRule" id="PRU01185"/>
    </source>
</evidence>
<reference key="1">
    <citation type="journal article" date="2007" name="Nature">
        <title>Evolution of genes and genomes on the Drosophila phylogeny.</title>
        <authorList>
            <consortium name="Drosophila 12 genomes consortium"/>
        </authorList>
    </citation>
    <scope>NUCLEOTIDE SEQUENCE [LARGE SCALE GENOMIC DNA]</scope>
    <source>
        <strain>Tucson 15081-1352.22</strain>
    </source>
</reference>
<sequence>MYGGDDFGNTDFYDDYAHTGDPQLDMEYERTFYANRMPDNVKFFLMNFCQAIKEGNLYDIQNMYENTFPQISDHHFDKSAWPEEQEVGAIVDNDKVFLILYKELYYRHIHARIPGGPKLEQRINSFFNYCDFFNLIISSQNPVMLELPDIWLWELVDEFVYQFQNFAQYRARLTDKSQDEIQQLCVNHSNVWSILCILNVLHSLVDISNIKKQLEAISQGIDPQTVAGDFGKLGFYKMLGYFSLVGLLRVHSLLGDYYQAIKVLEPIEIHKKSAYSHIPACQISTSYYVGFAYMMMRRYADAIRTFSDILLYIQRTKQLYSTRSYQNDQINKQAEQMYHLLAICLVLHPQCIDESIQQVLREKNYHDAMFKMQCGDLEVFKSFFVFACPRFVSPCPPAADAPMEDYVKDPMEHQLLVFMDEVRQQKDLPTTRSYLKLYTTLPLTKLASFIDPNASEDDVSKLLIRLLCFKHKMRNLVWSKGPSGLEGTFKSGSELDFYIDDDMIHIADTKVSHRYGDFFVRKIMKFNDLNRKLKNINI</sequence>
<protein>
    <recommendedName>
        <fullName evidence="1">Eukaryotic translation initiation factor 3 subunit L</fullName>
        <shortName evidence="1">eIF3l</shortName>
    </recommendedName>
</protein>
<name>EIF3L_DROMO</name>
<dbReference type="EMBL" id="CH933809">
    <property type="protein sequence ID" value="EDW17842.1"/>
    <property type="molecule type" value="Genomic_DNA"/>
</dbReference>
<dbReference type="SMR" id="B4KZ45"/>
<dbReference type="FunCoup" id="B4KZ45">
    <property type="interactions" value="1955"/>
</dbReference>
<dbReference type="EnsemblMetazoa" id="FBtr0163628">
    <property type="protein sequence ID" value="FBpp0162120"/>
    <property type="gene ID" value="FBgn0135660"/>
</dbReference>
<dbReference type="EnsemblMetazoa" id="XM_002007330.4">
    <property type="protein sequence ID" value="XP_002007366.1"/>
    <property type="gene ID" value="LOC6581642"/>
</dbReference>
<dbReference type="GeneID" id="6581642"/>
<dbReference type="KEGG" id="dmo:Dmoj_GI12903"/>
<dbReference type="CTD" id="51386"/>
<dbReference type="eggNOG" id="KOG3677">
    <property type="taxonomic scope" value="Eukaryota"/>
</dbReference>
<dbReference type="HOGENOM" id="CLU_029210_0_1_1"/>
<dbReference type="InParanoid" id="B4KZ45"/>
<dbReference type="OMA" id="AGWFIRN"/>
<dbReference type="OrthoDB" id="15082at2759"/>
<dbReference type="PhylomeDB" id="B4KZ45"/>
<dbReference type="Proteomes" id="UP000009192">
    <property type="component" value="Unassembled WGS sequence"/>
</dbReference>
<dbReference type="GO" id="GO:0016282">
    <property type="term" value="C:eukaryotic 43S preinitiation complex"/>
    <property type="evidence" value="ECO:0007669"/>
    <property type="project" value="UniProtKB-UniRule"/>
</dbReference>
<dbReference type="GO" id="GO:0033290">
    <property type="term" value="C:eukaryotic 48S preinitiation complex"/>
    <property type="evidence" value="ECO:0007669"/>
    <property type="project" value="UniProtKB-UniRule"/>
</dbReference>
<dbReference type="GO" id="GO:0005852">
    <property type="term" value="C:eukaryotic translation initiation factor 3 complex"/>
    <property type="evidence" value="ECO:0007669"/>
    <property type="project" value="UniProtKB-UniRule"/>
</dbReference>
<dbReference type="GO" id="GO:0003743">
    <property type="term" value="F:translation initiation factor activity"/>
    <property type="evidence" value="ECO:0007669"/>
    <property type="project" value="UniProtKB-UniRule"/>
</dbReference>
<dbReference type="GO" id="GO:0001732">
    <property type="term" value="P:formation of cytoplasmic translation initiation complex"/>
    <property type="evidence" value="ECO:0007669"/>
    <property type="project" value="UniProtKB-UniRule"/>
</dbReference>
<dbReference type="HAMAP" id="MF_03011">
    <property type="entry name" value="eIF3l"/>
    <property type="match status" value="1"/>
</dbReference>
<dbReference type="InterPro" id="IPR019382">
    <property type="entry name" value="eIF3l"/>
</dbReference>
<dbReference type="InterPro" id="IPR000717">
    <property type="entry name" value="PCI_dom"/>
</dbReference>
<dbReference type="InterPro" id="IPR011990">
    <property type="entry name" value="TPR-like_helical_dom_sf"/>
</dbReference>
<dbReference type="PANTHER" id="PTHR13242">
    <property type="entry name" value="EUKARYOTIC TRANSLATION INITIATION FACTOR 3"/>
    <property type="match status" value="1"/>
</dbReference>
<dbReference type="PANTHER" id="PTHR13242:SF0">
    <property type="entry name" value="EUKARYOTIC TRANSLATION INITIATION FACTOR 3 SUBUNIT L"/>
    <property type="match status" value="1"/>
</dbReference>
<dbReference type="Pfam" id="PF10255">
    <property type="entry name" value="Paf67"/>
    <property type="match status" value="1"/>
</dbReference>
<dbReference type="SUPFAM" id="SSF48452">
    <property type="entry name" value="TPR-like"/>
    <property type="match status" value="1"/>
</dbReference>
<dbReference type="PROSITE" id="PS50250">
    <property type="entry name" value="PCI"/>
    <property type="match status" value="1"/>
</dbReference>